<sequence>MLQNVIKELYDKGVLIFLDPNNYVTNNVAENPEIFANRDKFLEMYQDPIKIGWIFCYTPSLEEVLSTIKEDTCCLIEFGFNSDTEKKACETGRLLINHLVRHKFMAHWDENAIKNHKISTVITAKDLPESIQDLIVDYAPTTSTNPEQRE</sequence>
<comment type="similarity">
    <text evidence="1">Belongs to the IIV-6 391R family.</text>
</comment>
<gene>
    <name type="ORF">IIV3-058R</name>
</gene>
<protein>
    <recommendedName>
        <fullName>Uncharacterized protein 058R</fullName>
    </recommendedName>
</protein>
<proteinExistence type="inferred from homology"/>
<accession>Q197A2</accession>
<organism>
    <name type="scientific">Invertebrate iridescent virus 3</name>
    <name type="common">IIV-3</name>
    <name type="synonym">Mosquito iridescent virus</name>
    <dbReference type="NCBI Taxonomy" id="345201"/>
    <lineage>
        <taxon>Viruses</taxon>
        <taxon>Varidnaviria</taxon>
        <taxon>Bamfordvirae</taxon>
        <taxon>Nucleocytoviricota</taxon>
        <taxon>Megaviricetes</taxon>
        <taxon>Pimascovirales</taxon>
        <taxon>Iridoviridae</taxon>
        <taxon>Betairidovirinae</taxon>
        <taxon>Chloriridovirus</taxon>
    </lineage>
</organism>
<name>VF391_IIV3</name>
<evidence type="ECO:0000305" key="1"/>
<dbReference type="EMBL" id="DQ643392">
    <property type="protein sequence ID" value="ABF82088.1"/>
    <property type="molecule type" value="Genomic_DNA"/>
</dbReference>
<dbReference type="RefSeq" id="YP_654630.1">
    <property type="nucleotide sequence ID" value="NC_008187.1"/>
</dbReference>
<dbReference type="KEGG" id="vg:4156308"/>
<dbReference type="OrthoDB" id="16940at10239"/>
<dbReference type="Proteomes" id="UP000001358">
    <property type="component" value="Genome"/>
</dbReference>
<reference key="1">
    <citation type="journal article" date="2006" name="J. Virol.">
        <title>Genome of invertebrate iridescent virus type 3 (mosquito iridescent virus).</title>
        <authorList>
            <person name="Delhon G."/>
            <person name="Tulman E.R."/>
            <person name="Afonso C.L."/>
            <person name="Lu Z."/>
            <person name="Becnel J.J."/>
            <person name="Moser B.A."/>
            <person name="Kutish G.F."/>
            <person name="Rock D.L."/>
        </authorList>
    </citation>
    <scope>NUCLEOTIDE SEQUENCE [LARGE SCALE GENOMIC DNA]</scope>
</reference>
<feature type="chain" id="PRO_0000377792" description="Uncharacterized protein 058R">
    <location>
        <begin position="1"/>
        <end position="150"/>
    </location>
</feature>
<keyword id="KW-1185">Reference proteome</keyword>
<organismHost>
    <name type="scientific">Aedes vexans</name>
    <name type="common">Inland floodwater mosquito</name>
    <name type="synonym">Culex vexans</name>
    <dbReference type="NCBI Taxonomy" id="7163"/>
</organismHost>
<organismHost>
    <name type="scientific">Culex territans</name>
    <dbReference type="NCBI Taxonomy" id="42431"/>
</organismHost>
<organismHost>
    <name type="scientific">Culiseta annulata</name>
    <dbReference type="NCBI Taxonomy" id="332058"/>
</organismHost>
<organismHost>
    <name type="scientific">Ochlerotatus sollicitans</name>
    <name type="common">eastern saltmarsh mosquito</name>
    <dbReference type="NCBI Taxonomy" id="310513"/>
</organismHost>
<organismHost>
    <name type="scientific">Ochlerotatus taeniorhynchus</name>
    <name type="common">Black salt marsh mosquito</name>
    <name type="synonym">Aedes taeniorhynchus</name>
    <dbReference type="NCBI Taxonomy" id="329105"/>
</organismHost>
<organismHost>
    <name type="scientific">Psorophora ferox</name>
    <dbReference type="NCBI Taxonomy" id="7183"/>
</organismHost>